<sequence>MSQRKYFGTDGVRGEVGGPVINAAFALRLGYAAGRVLAREHREHASGRGRNRPQVVIGKDTRISGYMLESALEAGLSAAGIDVLLAGPVPTPAVAYLTRTLRLAAGIVISASHNPYQDNGIKFFSAHGMKLPDDIEAAIEQAVDEPLGCVGSEELGRARRMADAQGRYIEFCKSTFPHDLDLNGLKLVVDAAHGAAYNVAPHVFRELGAEVHAIGVSPDGFNINKGVGALHPESLAEEVRARGADLGIALDGDADRLQMVDGTGRIYNGDELLYAIVRERMQRGPVAGVVGTLMTNYGLERQLQQIGVGFERANVGDRYVLEQMQARGWLYGGESSGHLLCLDCHTTGDGTIAALQVLTALRRADATLAEWVADLRMYPQRMINVPLAPGLDWKTHDGLARARGAVEAELAGRGRVLIRASGTEPKLRLMVEAEDEALAQASAQKLADSLGA</sequence>
<protein>
    <recommendedName>
        <fullName evidence="1">Phosphoglucosamine mutase</fullName>
        <ecNumber evidence="1">5.4.2.10</ecNumber>
    </recommendedName>
</protein>
<keyword id="KW-0413">Isomerase</keyword>
<keyword id="KW-0460">Magnesium</keyword>
<keyword id="KW-0479">Metal-binding</keyword>
<keyword id="KW-0597">Phosphoprotein</keyword>
<keyword id="KW-1185">Reference proteome</keyword>
<organism>
    <name type="scientific">Bordetella pertussis (strain Tohama I / ATCC BAA-589 / NCTC 13251)</name>
    <dbReference type="NCBI Taxonomy" id="257313"/>
    <lineage>
        <taxon>Bacteria</taxon>
        <taxon>Pseudomonadati</taxon>
        <taxon>Pseudomonadota</taxon>
        <taxon>Betaproteobacteria</taxon>
        <taxon>Burkholderiales</taxon>
        <taxon>Alcaligenaceae</taxon>
        <taxon>Bordetella</taxon>
    </lineage>
</organism>
<gene>
    <name evidence="1" type="primary">glmM</name>
    <name type="ordered locus">BP1075</name>
</gene>
<feature type="chain" id="PRO_0000147856" description="Phosphoglucosamine mutase">
    <location>
        <begin position="1"/>
        <end position="452"/>
    </location>
</feature>
<feature type="active site" description="Phosphoserine intermediate" evidence="1">
    <location>
        <position position="112"/>
    </location>
</feature>
<feature type="binding site" description="via phosphate group" evidence="1">
    <location>
        <position position="112"/>
    </location>
    <ligand>
        <name>Mg(2+)</name>
        <dbReference type="ChEBI" id="CHEBI:18420"/>
    </ligand>
</feature>
<feature type="binding site" evidence="1">
    <location>
        <position position="251"/>
    </location>
    <ligand>
        <name>Mg(2+)</name>
        <dbReference type="ChEBI" id="CHEBI:18420"/>
    </ligand>
</feature>
<feature type="binding site" evidence="1">
    <location>
        <position position="253"/>
    </location>
    <ligand>
        <name>Mg(2+)</name>
        <dbReference type="ChEBI" id="CHEBI:18420"/>
    </ligand>
</feature>
<feature type="binding site" evidence="1">
    <location>
        <position position="255"/>
    </location>
    <ligand>
        <name>Mg(2+)</name>
        <dbReference type="ChEBI" id="CHEBI:18420"/>
    </ligand>
</feature>
<feature type="modified residue" description="Phosphoserine" evidence="1">
    <location>
        <position position="112"/>
    </location>
</feature>
<comment type="function">
    <text evidence="1">Catalyzes the conversion of glucosamine-6-phosphate to glucosamine-1-phosphate.</text>
</comment>
<comment type="catalytic activity">
    <reaction evidence="1">
        <text>alpha-D-glucosamine 1-phosphate = D-glucosamine 6-phosphate</text>
        <dbReference type="Rhea" id="RHEA:23424"/>
        <dbReference type="ChEBI" id="CHEBI:58516"/>
        <dbReference type="ChEBI" id="CHEBI:58725"/>
        <dbReference type="EC" id="5.4.2.10"/>
    </reaction>
</comment>
<comment type="cofactor">
    <cofactor evidence="1">
        <name>Mg(2+)</name>
        <dbReference type="ChEBI" id="CHEBI:18420"/>
    </cofactor>
    <text evidence="1">Binds 1 Mg(2+) ion per subunit.</text>
</comment>
<comment type="PTM">
    <text evidence="1">Activated by phosphorylation.</text>
</comment>
<comment type="similarity">
    <text evidence="1">Belongs to the phosphohexose mutase family.</text>
</comment>
<evidence type="ECO:0000255" key="1">
    <source>
        <dbReference type="HAMAP-Rule" id="MF_01554"/>
    </source>
</evidence>
<dbReference type="EC" id="5.4.2.10" evidence="1"/>
<dbReference type="EMBL" id="BX640414">
    <property type="protein sequence ID" value="CAE41374.1"/>
    <property type="molecule type" value="Genomic_DNA"/>
</dbReference>
<dbReference type="RefSeq" id="NP_879859.1">
    <property type="nucleotide sequence ID" value="NC_002929.2"/>
</dbReference>
<dbReference type="RefSeq" id="WP_003819875.1">
    <property type="nucleotide sequence ID" value="NZ_CP039022.1"/>
</dbReference>
<dbReference type="SMR" id="Q7VZ59"/>
<dbReference type="STRING" id="257313.BP1075"/>
<dbReference type="PaxDb" id="257313-BP1075"/>
<dbReference type="GeneID" id="69600999"/>
<dbReference type="KEGG" id="bpe:BP1075"/>
<dbReference type="PATRIC" id="fig|257313.5.peg.1150"/>
<dbReference type="eggNOG" id="COG1109">
    <property type="taxonomic scope" value="Bacteria"/>
</dbReference>
<dbReference type="HOGENOM" id="CLU_016950_7_0_4"/>
<dbReference type="Proteomes" id="UP000002676">
    <property type="component" value="Chromosome"/>
</dbReference>
<dbReference type="GO" id="GO:0005829">
    <property type="term" value="C:cytosol"/>
    <property type="evidence" value="ECO:0007669"/>
    <property type="project" value="TreeGrafter"/>
</dbReference>
<dbReference type="GO" id="GO:0000287">
    <property type="term" value="F:magnesium ion binding"/>
    <property type="evidence" value="ECO:0007669"/>
    <property type="project" value="UniProtKB-UniRule"/>
</dbReference>
<dbReference type="GO" id="GO:0008966">
    <property type="term" value="F:phosphoglucosamine mutase activity"/>
    <property type="evidence" value="ECO:0007669"/>
    <property type="project" value="UniProtKB-UniRule"/>
</dbReference>
<dbReference type="GO" id="GO:0004615">
    <property type="term" value="F:phosphomannomutase activity"/>
    <property type="evidence" value="ECO:0007669"/>
    <property type="project" value="TreeGrafter"/>
</dbReference>
<dbReference type="GO" id="GO:0005975">
    <property type="term" value="P:carbohydrate metabolic process"/>
    <property type="evidence" value="ECO:0007669"/>
    <property type="project" value="InterPro"/>
</dbReference>
<dbReference type="GO" id="GO:0009252">
    <property type="term" value="P:peptidoglycan biosynthetic process"/>
    <property type="evidence" value="ECO:0007669"/>
    <property type="project" value="TreeGrafter"/>
</dbReference>
<dbReference type="GO" id="GO:0006048">
    <property type="term" value="P:UDP-N-acetylglucosamine biosynthetic process"/>
    <property type="evidence" value="ECO:0007669"/>
    <property type="project" value="TreeGrafter"/>
</dbReference>
<dbReference type="CDD" id="cd05802">
    <property type="entry name" value="GlmM"/>
    <property type="match status" value="1"/>
</dbReference>
<dbReference type="FunFam" id="3.40.120.10:FF:000001">
    <property type="entry name" value="Phosphoglucosamine mutase"/>
    <property type="match status" value="1"/>
</dbReference>
<dbReference type="FunFam" id="3.40.120.10:FF:000003">
    <property type="entry name" value="Phosphoglucosamine mutase"/>
    <property type="match status" value="1"/>
</dbReference>
<dbReference type="Gene3D" id="3.40.120.10">
    <property type="entry name" value="Alpha-D-Glucose-1,6-Bisphosphate, subunit A, domain 3"/>
    <property type="match status" value="3"/>
</dbReference>
<dbReference type="Gene3D" id="3.30.310.50">
    <property type="entry name" value="Alpha-D-phosphohexomutase, C-terminal domain"/>
    <property type="match status" value="1"/>
</dbReference>
<dbReference type="HAMAP" id="MF_01554_B">
    <property type="entry name" value="GlmM_B"/>
    <property type="match status" value="1"/>
</dbReference>
<dbReference type="InterPro" id="IPR005844">
    <property type="entry name" value="A-D-PHexomutase_a/b/a-I"/>
</dbReference>
<dbReference type="InterPro" id="IPR016055">
    <property type="entry name" value="A-D-PHexomutase_a/b/a-I/II/III"/>
</dbReference>
<dbReference type="InterPro" id="IPR005845">
    <property type="entry name" value="A-D-PHexomutase_a/b/a-II"/>
</dbReference>
<dbReference type="InterPro" id="IPR005846">
    <property type="entry name" value="A-D-PHexomutase_a/b/a-III"/>
</dbReference>
<dbReference type="InterPro" id="IPR005843">
    <property type="entry name" value="A-D-PHexomutase_C"/>
</dbReference>
<dbReference type="InterPro" id="IPR036900">
    <property type="entry name" value="A-D-PHexomutase_C_sf"/>
</dbReference>
<dbReference type="InterPro" id="IPR016066">
    <property type="entry name" value="A-D-PHexomutase_CS"/>
</dbReference>
<dbReference type="InterPro" id="IPR005841">
    <property type="entry name" value="Alpha-D-phosphohexomutase_SF"/>
</dbReference>
<dbReference type="InterPro" id="IPR006352">
    <property type="entry name" value="GlmM_bact"/>
</dbReference>
<dbReference type="InterPro" id="IPR050060">
    <property type="entry name" value="Phosphoglucosamine_mutase"/>
</dbReference>
<dbReference type="NCBIfam" id="TIGR01455">
    <property type="entry name" value="glmM"/>
    <property type="match status" value="1"/>
</dbReference>
<dbReference type="NCBIfam" id="NF008139">
    <property type="entry name" value="PRK10887.1"/>
    <property type="match status" value="1"/>
</dbReference>
<dbReference type="PANTHER" id="PTHR42946:SF1">
    <property type="entry name" value="PHOSPHOGLUCOMUTASE (ALPHA-D-GLUCOSE-1,6-BISPHOSPHATE-DEPENDENT)"/>
    <property type="match status" value="1"/>
</dbReference>
<dbReference type="PANTHER" id="PTHR42946">
    <property type="entry name" value="PHOSPHOHEXOSE MUTASE"/>
    <property type="match status" value="1"/>
</dbReference>
<dbReference type="Pfam" id="PF02878">
    <property type="entry name" value="PGM_PMM_I"/>
    <property type="match status" value="1"/>
</dbReference>
<dbReference type="Pfam" id="PF02879">
    <property type="entry name" value="PGM_PMM_II"/>
    <property type="match status" value="1"/>
</dbReference>
<dbReference type="Pfam" id="PF02880">
    <property type="entry name" value="PGM_PMM_III"/>
    <property type="match status" value="1"/>
</dbReference>
<dbReference type="Pfam" id="PF00408">
    <property type="entry name" value="PGM_PMM_IV"/>
    <property type="match status" value="1"/>
</dbReference>
<dbReference type="PRINTS" id="PR00509">
    <property type="entry name" value="PGMPMM"/>
</dbReference>
<dbReference type="SUPFAM" id="SSF55957">
    <property type="entry name" value="Phosphoglucomutase, C-terminal domain"/>
    <property type="match status" value="1"/>
</dbReference>
<dbReference type="SUPFAM" id="SSF53738">
    <property type="entry name" value="Phosphoglucomutase, first 3 domains"/>
    <property type="match status" value="3"/>
</dbReference>
<dbReference type="PROSITE" id="PS00710">
    <property type="entry name" value="PGM_PMM"/>
    <property type="match status" value="1"/>
</dbReference>
<name>GLMM_BORPE</name>
<proteinExistence type="inferred from homology"/>
<reference key="1">
    <citation type="journal article" date="2003" name="Nat. Genet.">
        <title>Comparative analysis of the genome sequences of Bordetella pertussis, Bordetella parapertussis and Bordetella bronchiseptica.</title>
        <authorList>
            <person name="Parkhill J."/>
            <person name="Sebaihia M."/>
            <person name="Preston A."/>
            <person name="Murphy L.D."/>
            <person name="Thomson N.R."/>
            <person name="Harris D.E."/>
            <person name="Holden M.T.G."/>
            <person name="Churcher C.M."/>
            <person name="Bentley S.D."/>
            <person name="Mungall K.L."/>
            <person name="Cerdeno-Tarraga A.-M."/>
            <person name="Temple L."/>
            <person name="James K.D."/>
            <person name="Harris B."/>
            <person name="Quail M.A."/>
            <person name="Achtman M."/>
            <person name="Atkin R."/>
            <person name="Baker S."/>
            <person name="Basham D."/>
            <person name="Bason N."/>
            <person name="Cherevach I."/>
            <person name="Chillingworth T."/>
            <person name="Collins M."/>
            <person name="Cronin A."/>
            <person name="Davis P."/>
            <person name="Doggett J."/>
            <person name="Feltwell T."/>
            <person name="Goble A."/>
            <person name="Hamlin N."/>
            <person name="Hauser H."/>
            <person name="Holroyd S."/>
            <person name="Jagels K."/>
            <person name="Leather S."/>
            <person name="Moule S."/>
            <person name="Norberczak H."/>
            <person name="O'Neil S."/>
            <person name="Ormond D."/>
            <person name="Price C."/>
            <person name="Rabbinowitsch E."/>
            <person name="Rutter S."/>
            <person name="Sanders M."/>
            <person name="Saunders D."/>
            <person name="Seeger K."/>
            <person name="Sharp S."/>
            <person name="Simmonds M."/>
            <person name="Skelton J."/>
            <person name="Squares R."/>
            <person name="Squares S."/>
            <person name="Stevens K."/>
            <person name="Unwin L."/>
            <person name="Whitehead S."/>
            <person name="Barrell B.G."/>
            <person name="Maskell D.J."/>
        </authorList>
    </citation>
    <scope>NUCLEOTIDE SEQUENCE [LARGE SCALE GENOMIC DNA]</scope>
    <source>
        <strain>Tohama I / ATCC BAA-589 / NCTC 13251</strain>
    </source>
</reference>
<accession>Q7VZ59</accession>